<proteinExistence type="evidence at protein level"/>
<sequence>MEKNLSSRDDDALHSLSAPSSSYNSIYDLLHYHERGNGLTINGKPSYSIEDAGDQITRDNVSWNGANVFGKSANLTFKFLQSARSTPDGDTGFVKFNAAQISQAKLALQSWADVANVTFTEVTGNQSANVTFGNYTRDSSGRLDYGTQAYAYLPGSGSASGTTWYNYNVDNIRSPDTMEYGRQTLTHEIGHALGLNHPGDYNAGEGNPSYSDVTYAEDTRQFSIMSYWSEKNTGGDFKGHYAAGPMLDDIAAIQRLYGANMTTRTGDSVYGFNSNTDRDFYTATSSSKALIFSAWDAGGNDTFDFSGYSNNQRINLNDGSLSDVGGLKGNVSIAEGVTIENAIGGSGNDLLIGNNADNTLRGGAGDDVLFGGSGADRLYGGSGRDTFVYTAASDSKVAAPDWLLDFQTGADKIDLSALNTGNNLHFVNQFSGSGGEIMLNWDASANTSNLYLNLDNNTSPEFLVKIVGQVSQTADFVV</sequence>
<evidence type="ECO:0000250" key="1"/>
<evidence type="ECO:0000255" key="2">
    <source>
        <dbReference type="PROSITE-ProRule" id="PRU10095"/>
    </source>
</evidence>
<evidence type="ECO:0000269" key="3">
    <source>
    </source>
</evidence>
<evidence type="ECO:0000305" key="4"/>
<keyword id="KW-0106">Calcium</keyword>
<keyword id="KW-0378">Hydrolase</keyword>
<keyword id="KW-0479">Metal-binding</keyword>
<keyword id="KW-0482">Metalloprotease</keyword>
<keyword id="KW-0645">Protease</keyword>
<keyword id="KW-0677">Repeat</keyword>
<keyword id="KW-0964">Secreted</keyword>
<keyword id="KW-0862">Zinc</keyword>
<keyword id="KW-0865">Zymogen</keyword>
<dbReference type="EC" id="3.4.24.40"/>
<dbReference type="EMBL" id="M37390">
    <property type="protein sequence ID" value="AAA24859.1"/>
    <property type="molecule type" value="Genomic_DNA"/>
</dbReference>
<dbReference type="PIR" id="A36137">
    <property type="entry name" value="A36137"/>
</dbReference>
<dbReference type="SMR" id="P19144"/>
<dbReference type="MEROPS" id="M10.052"/>
<dbReference type="KEGG" id="ag:AAA24859"/>
<dbReference type="GO" id="GO:0031012">
    <property type="term" value="C:extracellular matrix"/>
    <property type="evidence" value="ECO:0007669"/>
    <property type="project" value="InterPro"/>
</dbReference>
<dbReference type="GO" id="GO:0005615">
    <property type="term" value="C:extracellular space"/>
    <property type="evidence" value="ECO:0007669"/>
    <property type="project" value="InterPro"/>
</dbReference>
<dbReference type="GO" id="GO:0005509">
    <property type="term" value="F:calcium ion binding"/>
    <property type="evidence" value="ECO:0007669"/>
    <property type="project" value="InterPro"/>
</dbReference>
<dbReference type="GO" id="GO:0004222">
    <property type="term" value="F:metalloendopeptidase activity"/>
    <property type="evidence" value="ECO:0007669"/>
    <property type="project" value="InterPro"/>
</dbReference>
<dbReference type="GO" id="GO:0008270">
    <property type="term" value="F:zinc ion binding"/>
    <property type="evidence" value="ECO:0007669"/>
    <property type="project" value="InterPro"/>
</dbReference>
<dbReference type="GO" id="GO:0030574">
    <property type="term" value="P:collagen catabolic process"/>
    <property type="evidence" value="ECO:0007669"/>
    <property type="project" value="TreeGrafter"/>
</dbReference>
<dbReference type="GO" id="GO:0030198">
    <property type="term" value="P:extracellular matrix organization"/>
    <property type="evidence" value="ECO:0007669"/>
    <property type="project" value="TreeGrafter"/>
</dbReference>
<dbReference type="GO" id="GO:0006508">
    <property type="term" value="P:proteolysis"/>
    <property type="evidence" value="ECO:0007669"/>
    <property type="project" value="UniProtKB-KW"/>
</dbReference>
<dbReference type="CDD" id="cd04277">
    <property type="entry name" value="ZnMc_serralysin_like"/>
    <property type="match status" value="1"/>
</dbReference>
<dbReference type="Gene3D" id="3.40.390.10">
    <property type="entry name" value="Collagenase (Catalytic Domain)"/>
    <property type="match status" value="1"/>
</dbReference>
<dbReference type="Gene3D" id="2.150.10.10">
    <property type="entry name" value="Serralysin-like metalloprotease, C-terminal"/>
    <property type="match status" value="1"/>
</dbReference>
<dbReference type="InterPro" id="IPR018511">
    <property type="entry name" value="Hemolysin-typ_Ca-bd_CS"/>
</dbReference>
<dbReference type="InterPro" id="IPR001343">
    <property type="entry name" value="Hemolysn_Ca-bd"/>
</dbReference>
<dbReference type="InterPro" id="IPR024079">
    <property type="entry name" value="MetalloPept_cat_dom_sf"/>
</dbReference>
<dbReference type="InterPro" id="IPR001818">
    <property type="entry name" value="Pept_M10_metallopeptidase"/>
</dbReference>
<dbReference type="InterPro" id="IPR016294">
    <property type="entry name" value="Pept_M10B"/>
</dbReference>
<dbReference type="InterPro" id="IPR013858">
    <property type="entry name" value="Peptidase_M10B_C"/>
</dbReference>
<dbReference type="InterPro" id="IPR006026">
    <property type="entry name" value="Peptidase_Metallo"/>
</dbReference>
<dbReference type="InterPro" id="IPR034033">
    <property type="entry name" value="Serralysin-like"/>
</dbReference>
<dbReference type="InterPro" id="IPR011049">
    <property type="entry name" value="Serralysin-like_metalloprot_C"/>
</dbReference>
<dbReference type="NCBIfam" id="NF035945">
    <property type="entry name" value="Zn_serralysin"/>
    <property type="match status" value="1"/>
</dbReference>
<dbReference type="PANTHER" id="PTHR10201">
    <property type="entry name" value="MATRIX METALLOPROTEINASE"/>
    <property type="match status" value="1"/>
</dbReference>
<dbReference type="PANTHER" id="PTHR10201:SF323">
    <property type="entry name" value="MATRIX METALLOPROTEINASE-21"/>
    <property type="match status" value="1"/>
</dbReference>
<dbReference type="Pfam" id="PF00353">
    <property type="entry name" value="HemolysinCabind"/>
    <property type="match status" value="1"/>
</dbReference>
<dbReference type="Pfam" id="PF00413">
    <property type="entry name" value="Peptidase_M10"/>
    <property type="match status" value="1"/>
</dbReference>
<dbReference type="Pfam" id="PF08548">
    <property type="entry name" value="Peptidase_M10_C"/>
    <property type="match status" value="1"/>
</dbReference>
<dbReference type="PIRSF" id="PIRSF001205">
    <property type="entry name" value="Peptidase_M10B"/>
    <property type="match status" value="1"/>
</dbReference>
<dbReference type="PRINTS" id="PR00313">
    <property type="entry name" value="CABNDNGRPT"/>
</dbReference>
<dbReference type="SMART" id="SM00235">
    <property type="entry name" value="ZnMc"/>
    <property type="match status" value="1"/>
</dbReference>
<dbReference type="SUPFAM" id="SSF51120">
    <property type="entry name" value="beta-Roll"/>
    <property type="match status" value="1"/>
</dbReference>
<dbReference type="SUPFAM" id="SSF55486">
    <property type="entry name" value="Metalloproteases ('zincins'), catalytic domain"/>
    <property type="match status" value="1"/>
</dbReference>
<dbReference type="PROSITE" id="PS00330">
    <property type="entry name" value="HEMOLYSIN_CALCIUM"/>
    <property type="match status" value="1"/>
</dbReference>
<dbReference type="PROSITE" id="PS00142">
    <property type="entry name" value="ZINC_PROTEASE"/>
    <property type="match status" value="1"/>
</dbReference>
<feature type="propeptide" id="PRO_0000028685" evidence="4">
    <location>
        <begin position="1"/>
        <end position="17"/>
    </location>
</feature>
<feature type="chain" id="PRO_0000028686" description="Serralysin C">
    <location>
        <begin position="18"/>
        <end position="478"/>
    </location>
</feature>
<feature type="repeat" description="Hemolysin-type calcium-binding 1">
    <location>
        <begin position="343"/>
        <end position="360"/>
    </location>
</feature>
<feature type="repeat" description="Hemolysin-type calcium-binding 2">
    <location>
        <begin position="361"/>
        <end position="378"/>
    </location>
</feature>
<feature type="active site" evidence="2">
    <location>
        <position position="188"/>
    </location>
</feature>
<feature type="binding site" evidence="2">
    <location>
        <position position="187"/>
    </location>
    <ligand>
        <name>Zn(2+)</name>
        <dbReference type="ChEBI" id="CHEBI:29105"/>
        <note>catalytic</note>
    </ligand>
</feature>
<feature type="binding site" evidence="2">
    <location>
        <position position="191"/>
    </location>
    <ligand>
        <name>Zn(2+)</name>
        <dbReference type="ChEBI" id="CHEBI:29105"/>
        <note>catalytic</note>
    </ligand>
</feature>
<feature type="binding site" evidence="2">
    <location>
        <position position="227"/>
    </location>
    <ligand>
        <name>Zn(2+)</name>
        <dbReference type="ChEBI" id="CHEBI:29105"/>
        <note>catalytic</note>
    </ligand>
</feature>
<feature type="binding site" evidence="1">
    <location>
        <position position="264"/>
    </location>
    <ligand>
        <name>Ca(2+)</name>
        <dbReference type="ChEBI" id="CHEBI:29108"/>
        <label>1</label>
    </ligand>
</feature>
<feature type="binding site" evidence="1">
    <location>
        <position position="266"/>
    </location>
    <ligand>
        <name>Ca(2+)</name>
        <dbReference type="ChEBI" id="CHEBI:29108"/>
        <label>1</label>
    </ligand>
</feature>
<feature type="binding site" evidence="1">
    <location>
        <position position="296"/>
    </location>
    <ligand>
        <name>Ca(2+)</name>
        <dbReference type="ChEBI" id="CHEBI:29108"/>
        <label>1</label>
    </ligand>
</feature>
<feature type="binding site" evidence="1">
    <location>
        <position position="298"/>
    </location>
    <ligand>
        <name>Ca(2+)</name>
        <dbReference type="ChEBI" id="CHEBI:29108"/>
        <label>1</label>
    </ligand>
</feature>
<feature type="binding site" evidence="1">
    <location>
        <position position="299"/>
    </location>
    <ligand>
        <name>Ca(2+)</name>
        <dbReference type="ChEBI" id="CHEBI:29108"/>
        <label>2</label>
    </ligand>
</feature>
<feature type="binding site" evidence="1">
    <location>
        <position position="301"/>
    </location>
    <ligand>
        <name>Ca(2+)</name>
        <dbReference type="ChEBI" id="CHEBI:29108"/>
        <label>1</label>
    </ligand>
</feature>
<feature type="binding site" evidence="1">
    <location>
        <position position="301"/>
    </location>
    <ligand>
        <name>Ca(2+)</name>
        <dbReference type="ChEBI" id="CHEBI:29108"/>
        <label>2</label>
    </ligand>
</feature>
<feature type="binding site" evidence="1">
    <location>
        <position position="338"/>
    </location>
    <ligand>
        <name>Ca(2+)</name>
        <dbReference type="ChEBI" id="CHEBI:29108"/>
        <label>2</label>
    </ligand>
</feature>
<feature type="binding site" evidence="1">
    <location>
        <position position="340"/>
    </location>
    <ligand>
        <name>Ca(2+)</name>
        <dbReference type="ChEBI" id="CHEBI:29108"/>
        <label>2</label>
    </ligand>
</feature>
<feature type="binding site" evidence="1">
    <location>
        <position position="345"/>
    </location>
    <ligand>
        <name>Ca(2+)</name>
        <dbReference type="ChEBI" id="CHEBI:29108"/>
        <label>3</label>
    </ligand>
</feature>
<feature type="binding site" evidence="1">
    <location>
        <position position="347"/>
    </location>
    <ligand>
        <name>Ca(2+)</name>
        <dbReference type="ChEBI" id="CHEBI:29108"/>
        <label>3</label>
    </ligand>
</feature>
<feature type="binding site" evidence="1">
    <location>
        <position position="349"/>
    </location>
    <ligand>
        <name>Ca(2+)</name>
        <dbReference type="ChEBI" id="CHEBI:29108"/>
        <label>3</label>
    </ligand>
</feature>
<feature type="binding site" evidence="1">
    <location>
        <position position="354"/>
    </location>
    <ligand>
        <name>Ca(2+)</name>
        <dbReference type="ChEBI" id="CHEBI:29108"/>
        <label>4</label>
    </ligand>
</feature>
<feature type="binding site" evidence="1">
    <location>
        <position position="356"/>
    </location>
    <ligand>
        <name>Ca(2+)</name>
        <dbReference type="ChEBI" id="CHEBI:29108"/>
        <label>4</label>
    </ligand>
</feature>
<feature type="binding site" evidence="1">
    <location>
        <position position="358"/>
    </location>
    <ligand>
        <name>Ca(2+)</name>
        <dbReference type="ChEBI" id="CHEBI:29108"/>
        <label>4</label>
    </ligand>
</feature>
<feature type="binding site" evidence="1">
    <location>
        <position position="362"/>
    </location>
    <ligand>
        <name>Ca(2+)</name>
        <dbReference type="ChEBI" id="CHEBI:29108"/>
        <label>3</label>
    </ligand>
</feature>
<feature type="binding site" evidence="1">
    <location>
        <position position="363"/>
    </location>
    <ligand>
        <name>Ca(2+)</name>
        <dbReference type="ChEBI" id="CHEBI:29108"/>
        <label>5</label>
    </ligand>
</feature>
<feature type="binding site" evidence="1">
    <location>
        <position position="364"/>
    </location>
    <ligand>
        <name>Ca(2+)</name>
        <dbReference type="ChEBI" id="CHEBI:29108"/>
        <label>3</label>
    </ligand>
</feature>
<feature type="binding site" evidence="1">
    <location>
        <position position="365"/>
    </location>
    <ligand>
        <name>Ca(2+)</name>
        <dbReference type="ChEBI" id="CHEBI:29108"/>
        <label>5</label>
    </ligand>
</feature>
<feature type="binding site" evidence="1">
    <location>
        <position position="367"/>
    </location>
    <ligand>
        <name>Ca(2+)</name>
        <dbReference type="ChEBI" id="CHEBI:29108"/>
        <label>3</label>
    </ligand>
</feature>
<feature type="binding site" evidence="1">
    <location>
        <position position="367"/>
    </location>
    <ligand>
        <name>Ca(2+)</name>
        <dbReference type="ChEBI" id="CHEBI:29108"/>
        <label>5</label>
    </ligand>
</feature>
<feature type="binding site" evidence="1">
    <location>
        <position position="371"/>
    </location>
    <ligand>
        <name>Ca(2+)</name>
        <dbReference type="ChEBI" id="CHEBI:29108"/>
        <label>4</label>
    </ligand>
</feature>
<feature type="binding site" evidence="1">
    <location>
        <position position="372"/>
    </location>
    <ligand>
        <name>Ca(2+)</name>
        <dbReference type="ChEBI" id="CHEBI:29108"/>
        <label>6</label>
    </ligand>
</feature>
<feature type="binding site" evidence="1">
    <location>
        <position position="374"/>
    </location>
    <ligand>
        <name>Ca(2+)</name>
        <dbReference type="ChEBI" id="CHEBI:29108"/>
        <label>6</label>
    </ligand>
</feature>
<feature type="binding site" evidence="1">
    <location>
        <position position="376"/>
    </location>
    <ligand>
        <name>Ca(2+)</name>
        <dbReference type="ChEBI" id="CHEBI:29108"/>
        <label>4</label>
    </ligand>
</feature>
<feature type="binding site" evidence="1">
    <location>
        <position position="376"/>
    </location>
    <ligand>
        <name>Ca(2+)</name>
        <dbReference type="ChEBI" id="CHEBI:29108"/>
        <label>6</label>
    </ligand>
</feature>
<feature type="binding site" evidence="1">
    <location>
        <position position="380"/>
    </location>
    <ligand>
        <name>Ca(2+)</name>
        <dbReference type="ChEBI" id="CHEBI:29108"/>
        <label>5</label>
    </ligand>
</feature>
<feature type="binding site" evidence="1">
    <location>
        <position position="381"/>
    </location>
    <ligand>
        <name>Ca(2+)</name>
        <dbReference type="ChEBI" id="CHEBI:29108"/>
        <label>7</label>
    </ligand>
</feature>
<feature type="binding site" evidence="1">
    <location>
        <position position="383"/>
    </location>
    <ligand>
        <name>Ca(2+)</name>
        <dbReference type="ChEBI" id="CHEBI:29108"/>
        <label>7</label>
    </ligand>
</feature>
<feature type="binding site" evidence="1">
    <location>
        <position position="385"/>
    </location>
    <ligand>
        <name>Ca(2+)</name>
        <dbReference type="ChEBI" id="CHEBI:29108"/>
        <label>5</label>
    </ligand>
</feature>
<feature type="binding site" evidence="1">
    <location>
        <position position="385"/>
    </location>
    <ligand>
        <name>Ca(2+)</name>
        <dbReference type="ChEBI" id="CHEBI:29108"/>
        <label>7</label>
    </ligand>
</feature>
<feature type="binding site" evidence="1">
    <location>
        <position position="394"/>
    </location>
    <ligand>
        <name>Ca(2+)</name>
        <dbReference type="ChEBI" id="CHEBI:29108"/>
        <label>6</label>
    </ligand>
</feature>
<feature type="binding site" evidence="1">
    <location>
        <position position="401"/>
    </location>
    <ligand>
        <name>Ca(2+)</name>
        <dbReference type="ChEBI" id="CHEBI:29108"/>
        <label>6</label>
    </ligand>
</feature>
<feature type="binding site" evidence="1">
    <location>
        <position position="411"/>
    </location>
    <ligand>
        <name>Ca(2+)</name>
        <dbReference type="ChEBI" id="CHEBI:29108"/>
        <label>7</label>
    </ligand>
</feature>
<gene>
    <name type="primary">prtC</name>
</gene>
<reference key="1">
    <citation type="journal article" date="1990" name="J. Bacteriol.">
        <title>Cloning of genes encoding extracellular metalloproteases from Erwinia chrysanthemi EC16.</title>
        <authorList>
            <person name="Dahler G.S."/>
            <person name="Barras F."/>
            <person name="Keen N.T."/>
        </authorList>
    </citation>
    <scope>NUCLEOTIDE SEQUENCE [GENOMIC DNA]</scope>
    <scope>CATALYTIC ACTIVITY</scope>
    <source>
        <strain>EC16</strain>
    </source>
</reference>
<organism>
    <name type="scientific">Dickeya chrysanthemi</name>
    <name type="common">Pectobacterium chrysanthemi</name>
    <name type="synonym">Erwinia chrysanthemi</name>
    <dbReference type="NCBI Taxonomy" id="556"/>
    <lineage>
        <taxon>Bacteria</taxon>
        <taxon>Pseudomonadati</taxon>
        <taxon>Pseudomonadota</taxon>
        <taxon>Gammaproteobacteria</taxon>
        <taxon>Enterobacterales</taxon>
        <taxon>Pectobacteriaceae</taxon>
        <taxon>Dickeya</taxon>
    </lineage>
</organism>
<protein>
    <recommendedName>
        <fullName>Serralysin C</fullName>
        <ecNumber>3.4.24.40</ecNumber>
    </recommendedName>
    <alternativeName>
        <fullName>Secreted protease C</fullName>
        <shortName>ProC</shortName>
    </alternativeName>
</protein>
<name>PRTX_DICCH</name>
<accession>P19144</accession>
<comment type="catalytic activity">
    <reaction evidence="3">
        <text>Preferential cleavage of bonds with hydrophobic residues in P1'.</text>
        <dbReference type="EC" id="3.4.24.40"/>
    </reaction>
</comment>
<comment type="cofactor">
    <cofactor evidence="1">
        <name>Ca(2+)</name>
        <dbReference type="ChEBI" id="CHEBI:29108"/>
    </cofactor>
    <text evidence="1">Binds 7 Ca(2+) ions per subunit.</text>
</comment>
<comment type="cofactor">
    <cofactor evidence="1">
        <name>Zn(2+)</name>
        <dbReference type="ChEBI" id="CHEBI:29105"/>
    </cofactor>
    <text evidence="1">Binds 1 zinc ion per subunit.</text>
</comment>
<comment type="subcellular location">
    <subcellularLocation>
        <location>Secreted</location>
    </subcellularLocation>
</comment>
<comment type="domain">
    <text>The Gly-rich repeats may be important in the extracellular secretion of this metalloprotease.</text>
</comment>
<comment type="miscellaneous">
    <text>Could be the homolog of prtA from strain B374.</text>
</comment>
<comment type="similarity">
    <text evidence="4">Belongs to the peptidase M10B family.</text>
</comment>